<protein>
    <recommendedName>
        <fullName evidence="1">Probable transcriptional regulatory protein MLBr00475</fullName>
    </recommendedName>
</protein>
<name>Y475_MYCLB</name>
<evidence type="ECO:0000255" key="1">
    <source>
        <dbReference type="HAMAP-Rule" id="MF_00693"/>
    </source>
</evidence>
<gene>
    <name type="ordered locus">MLBr00475</name>
</gene>
<dbReference type="EMBL" id="FM211192">
    <property type="protein sequence ID" value="CAR70568.1"/>
    <property type="molecule type" value="Genomic_DNA"/>
</dbReference>
<dbReference type="SMR" id="B8ZUH9"/>
<dbReference type="KEGG" id="mlb:MLBr00475"/>
<dbReference type="HOGENOM" id="CLU_062974_2_2_11"/>
<dbReference type="Proteomes" id="UP000006900">
    <property type="component" value="Chromosome"/>
</dbReference>
<dbReference type="GO" id="GO:0005829">
    <property type="term" value="C:cytosol"/>
    <property type="evidence" value="ECO:0007669"/>
    <property type="project" value="TreeGrafter"/>
</dbReference>
<dbReference type="GO" id="GO:0003677">
    <property type="term" value="F:DNA binding"/>
    <property type="evidence" value="ECO:0007669"/>
    <property type="project" value="UniProtKB-UniRule"/>
</dbReference>
<dbReference type="GO" id="GO:0006355">
    <property type="term" value="P:regulation of DNA-templated transcription"/>
    <property type="evidence" value="ECO:0007669"/>
    <property type="project" value="UniProtKB-UniRule"/>
</dbReference>
<dbReference type="FunFam" id="1.10.10.200:FF:000002">
    <property type="entry name" value="Probable transcriptional regulatory protein CLM62_37755"/>
    <property type="match status" value="1"/>
</dbReference>
<dbReference type="FunFam" id="3.30.70.980:FF:000006">
    <property type="entry name" value="Probable transcriptional regulatory protein J113_18170"/>
    <property type="match status" value="1"/>
</dbReference>
<dbReference type="Gene3D" id="1.10.10.200">
    <property type="match status" value="1"/>
</dbReference>
<dbReference type="Gene3D" id="3.30.70.980">
    <property type="match status" value="2"/>
</dbReference>
<dbReference type="HAMAP" id="MF_00693">
    <property type="entry name" value="Transcrip_reg_TACO1"/>
    <property type="match status" value="1"/>
</dbReference>
<dbReference type="InterPro" id="IPR017856">
    <property type="entry name" value="Integrase-like_N"/>
</dbReference>
<dbReference type="InterPro" id="IPR048300">
    <property type="entry name" value="TACO1_YebC-like_2nd/3rd_dom"/>
</dbReference>
<dbReference type="InterPro" id="IPR049083">
    <property type="entry name" value="TACO1_YebC_N"/>
</dbReference>
<dbReference type="InterPro" id="IPR002876">
    <property type="entry name" value="Transcrip_reg_TACO1-like"/>
</dbReference>
<dbReference type="InterPro" id="IPR026564">
    <property type="entry name" value="Transcrip_reg_TACO1-like_dom3"/>
</dbReference>
<dbReference type="InterPro" id="IPR029072">
    <property type="entry name" value="YebC-like"/>
</dbReference>
<dbReference type="NCBIfam" id="NF001030">
    <property type="entry name" value="PRK00110.1"/>
    <property type="match status" value="1"/>
</dbReference>
<dbReference type="NCBIfam" id="NF009044">
    <property type="entry name" value="PRK12378.1"/>
    <property type="match status" value="1"/>
</dbReference>
<dbReference type="NCBIfam" id="TIGR01033">
    <property type="entry name" value="YebC/PmpR family DNA-binding transcriptional regulator"/>
    <property type="match status" value="1"/>
</dbReference>
<dbReference type="PANTHER" id="PTHR12532:SF6">
    <property type="entry name" value="TRANSCRIPTIONAL REGULATORY PROTEIN YEBC-RELATED"/>
    <property type="match status" value="1"/>
</dbReference>
<dbReference type="PANTHER" id="PTHR12532">
    <property type="entry name" value="TRANSLATIONAL ACTIVATOR OF CYTOCHROME C OXIDASE 1"/>
    <property type="match status" value="1"/>
</dbReference>
<dbReference type="Pfam" id="PF20772">
    <property type="entry name" value="TACO1_YebC_N"/>
    <property type="match status" value="1"/>
</dbReference>
<dbReference type="Pfam" id="PF01709">
    <property type="entry name" value="Transcrip_reg"/>
    <property type="match status" value="1"/>
</dbReference>
<dbReference type="SUPFAM" id="SSF75625">
    <property type="entry name" value="YebC-like"/>
    <property type="match status" value="1"/>
</dbReference>
<feature type="chain" id="PRO_1000200103" description="Probable transcriptional regulatory protein MLBr00475">
    <location>
        <begin position="1"/>
        <end position="251"/>
    </location>
</feature>
<keyword id="KW-0963">Cytoplasm</keyword>
<keyword id="KW-0238">DNA-binding</keyword>
<keyword id="KW-0804">Transcription</keyword>
<keyword id="KW-0805">Transcription regulation</keyword>
<reference key="1">
    <citation type="journal article" date="2009" name="Nat. Genet.">
        <title>Comparative genomic and phylogeographic analysis of Mycobacterium leprae.</title>
        <authorList>
            <person name="Monot M."/>
            <person name="Honore N."/>
            <person name="Garnier T."/>
            <person name="Zidane N."/>
            <person name="Sherafi D."/>
            <person name="Paniz-Mondolfi A."/>
            <person name="Matsuoka M."/>
            <person name="Taylor G.M."/>
            <person name="Donoghue H.D."/>
            <person name="Bouwman A."/>
            <person name="Mays S."/>
            <person name="Watson C."/>
            <person name="Lockwood D."/>
            <person name="Khamispour A."/>
            <person name="Dowlati Y."/>
            <person name="Jianping S."/>
            <person name="Rea T.H."/>
            <person name="Vera-Cabrera L."/>
            <person name="Stefani M.M."/>
            <person name="Banu S."/>
            <person name="Macdonald M."/>
            <person name="Sapkota B.R."/>
            <person name="Spencer J.S."/>
            <person name="Thomas J."/>
            <person name="Harshman K."/>
            <person name="Singh P."/>
            <person name="Busso P."/>
            <person name="Gattiker A."/>
            <person name="Rougemont J."/>
            <person name="Brennan P.J."/>
            <person name="Cole S.T."/>
        </authorList>
    </citation>
    <scope>NUCLEOTIDE SEQUENCE [LARGE SCALE GENOMIC DNA]</scope>
    <source>
        <strain>Br4923</strain>
    </source>
</reference>
<proteinExistence type="inferred from homology"/>
<comment type="subcellular location">
    <subcellularLocation>
        <location evidence="1">Cytoplasm</location>
    </subcellularLocation>
</comment>
<comment type="similarity">
    <text evidence="1">Belongs to the TACO1 family.</text>
</comment>
<organism>
    <name type="scientific">Mycobacterium leprae (strain Br4923)</name>
    <dbReference type="NCBI Taxonomy" id="561304"/>
    <lineage>
        <taxon>Bacteria</taxon>
        <taxon>Bacillati</taxon>
        <taxon>Actinomycetota</taxon>
        <taxon>Actinomycetes</taxon>
        <taxon>Mycobacteriales</taxon>
        <taxon>Mycobacteriaceae</taxon>
        <taxon>Mycobacterium</taxon>
    </lineage>
</organism>
<accession>B8ZUH9</accession>
<sequence>MSGHSKWATTKHKKAVIDARRGKMFARLIKNIEVAARVGGGDPVGNPTLYDAIQKAKKSSVPNGNIERARKRGAGEEVGGADWQVITYEGYAPNGVAVLIECLTDNRNRAAGEVRVAMTRNGGAMADPGSVAYLFSRKGVVTLEKNGLTEDDVLAAVLDAGAEEVNDLGDSFEVIAEPGDLVAVRTALQDAGIDYESAEASFQPSVSMPVDLDGARKVFKLVDALEDSDDVHNVWTNADVSDEVLAALDGE</sequence>